<protein>
    <recommendedName>
        <fullName>DNA replication regulator sld2</fullName>
    </recommendedName>
</protein>
<sequence length="569" mass="62156">MATVTVSEISNQAAILRAELKEWERGFAAANGGKKAERGDIKKVPEIAAKYKEYSRLKSQESASSSKNDKSHSKPTDTQERSKKRKHSSPNGPEQSQSHCQTTSTPRKSAAGIFQTPSKLKTTHPADVDPYDSPSVLRRLFSPSTHMQTSSPLKTAIGPTPQRDGKALGLFDLLSESGGSTATPTAARMASLKGIAAQTPSKKRKMDTIREEDEEEEDSPRVERTPASSGKKYMLSALFATPTAWKYSSIVDDGTSRGVIGNNDVTKQSPQATRNIDHANANLETPSFLRRSTSGLTGPDPTDMSPLPVRKPQQFVGKGLSQLVQGLRDMEEERLEDEWDVLREIEIEQTGTGVDVPNSQAADPNSTGRTFKKKGQKRTTRLVKMRPVVQAKPTTTRSQPQSLSQSEPRFEHNLVSAGGSGDVDELGIDDNDLVAVAETQADGPPSGRVGIPAAFIDDDLDSLRSISEAEQDSDSDPDYDADSKPLGRSKSFSEKMKEAIGATGQGSDTKQAQERQKVKAKEKKEKENIDTNAKKPSTRKINPQAHANYRSLKIRNRGGGRNFGRFRRR</sequence>
<gene>
    <name type="primary">sld2</name>
    <name type="ORF">AN3040</name>
</gene>
<accession>Q5B8U0</accession>
<accession>C8VIT3</accession>
<reference key="1">
    <citation type="journal article" date="2005" name="Nature">
        <title>Sequencing of Aspergillus nidulans and comparative analysis with A. fumigatus and A. oryzae.</title>
        <authorList>
            <person name="Galagan J.E."/>
            <person name="Calvo S.E."/>
            <person name="Cuomo C."/>
            <person name="Ma L.-J."/>
            <person name="Wortman J.R."/>
            <person name="Batzoglou S."/>
            <person name="Lee S.-I."/>
            <person name="Bastuerkmen M."/>
            <person name="Spevak C.C."/>
            <person name="Clutterbuck J."/>
            <person name="Kapitonov V."/>
            <person name="Jurka J."/>
            <person name="Scazzocchio C."/>
            <person name="Farman M.L."/>
            <person name="Butler J."/>
            <person name="Purcell S."/>
            <person name="Harris S."/>
            <person name="Braus G.H."/>
            <person name="Draht O."/>
            <person name="Busch S."/>
            <person name="D'Enfert C."/>
            <person name="Bouchier C."/>
            <person name="Goldman G.H."/>
            <person name="Bell-Pedersen D."/>
            <person name="Griffiths-Jones S."/>
            <person name="Doonan J.H."/>
            <person name="Yu J."/>
            <person name="Vienken K."/>
            <person name="Pain A."/>
            <person name="Freitag M."/>
            <person name="Selker E.U."/>
            <person name="Archer D.B."/>
            <person name="Penalva M.A."/>
            <person name="Oakley B.R."/>
            <person name="Momany M."/>
            <person name="Tanaka T."/>
            <person name="Kumagai T."/>
            <person name="Asai K."/>
            <person name="Machida M."/>
            <person name="Nierman W.C."/>
            <person name="Denning D.W."/>
            <person name="Caddick M.X."/>
            <person name="Hynes M."/>
            <person name="Paoletti M."/>
            <person name="Fischer R."/>
            <person name="Miller B.L."/>
            <person name="Dyer P.S."/>
            <person name="Sachs M.S."/>
            <person name="Osmani S.A."/>
            <person name="Birren B.W."/>
        </authorList>
    </citation>
    <scope>NUCLEOTIDE SEQUENCE [LARGE SCALE GENOMIC DNA]</scope>
    <source>
        <strain>FGSC A4 / ATCC 38163 / CBS 112.46 / NRRL 194 / M139</strain>
    </source>
</reference>
<reference key="2">
    <citation type="journal article" date="2009" name="Fungal Genet. Biol.">
        <title>The 2008 update of the Aspergillus nidulans genome annotation: a community effort.</title>
        <authorList>
            <person name="Wortman J.R."/>
            <person name="Gilsenan J.M."/>
            <person name="Joardar V."/>
            <person name="Deegan J."/>
            <person name="Clutterbuck J."/>
            <person name="Andersen M.R."/>
            <person name="Archer D."/>
            <person name="Bencina M."/>
            <person name="Braus G."/>
            <person name="Coutinho P."/>
            <person name="von Dohren H."/>
            <person name="Doonan J."/>
            <person name="Driessen A.J."/>
            <person name="Durek P."/>
            <person name="Espeso E."/>
            <person name="Fekete E."/>
            <person name="Flipphi M."/>
            <person name="Estrada C.G."/>
            <person name="Geysens S."/>
            <person name="Goldman G."/>
            <person name="de Groot P.W."/>
            <person name="Hansen K."/>
            <person name="Harris S.D."/>
            <person name="Heinekamp T."/>
            <person name="Helmstaedt K."/>
            <person name="Henrissat B."/>
            <person name="Hofmann G."/>
            <person name="Homan T."/>
            <person name="Horio T."/>
            <person name="Horiuchi H."/>
            <person name="James S."/>
            <person name="Jones M."/>
            <person name="Karaffa L."/>
            <person name="Karanyi Z."/>
            <person name="Kato M."/>
            <person name="Keller N."/>
            <person name="Kelly D.E."/>
            <person name="Kiel J.A."/>
            <person name="Kim J.M."/>
            <person name="van der Klei I.J."/>
            <person name="Klis F.M."/>
            <person name="Kovalchuk A."/>
            <person name="Krasevec N."/>
            <person name="Kubicek C.P."/>
            <person name="Liu B."/>
            <person name="Maccabe A."/>
            <person name="Meyer V."/>
            <person name="Mirabito P."/>
            <person name="Miskei M."/>
            <person name="Mos M."/>
            <person name="Mullins J."/>
            <person name="Nelson D.R."/>
            <person name="Nielsen J."/>
            <person name="Oakley B.R."/>
            <person name="Osmani S.A."/>
            <person name="Pakula T."/>
            <person name="Paszewski A."/>
            <person name="Paulsen I."/>
            <person name="Pilsyk S."/>
            <person name="Pocsi I."/>
            <person name="Punt P.J."/>
            <person name="Ram A.F."/>
            <person name="Ren Q."/>
            <person name="Robellet X."/>
            <person name="Robson G."/>
            <person name="Seiboth B."/>
            <person name="van Solingen P."/>
            <person name="Specht T."/>
            <person name="Sun J."/>
            <person name="Taheri-Talesh N."/>
            <person name="Takeshita N."/>
            <person name="Ussery D."/>
            <person name="vanKuyk P.A."/>
            <person name="Visser H."/>
            <person name="van de Vondervoort P.J."/>
            <person name="de Vries R.P."/>
            <person name="Walton J."/>
            <person name="Xiang X."/>
            <person name="Xiong Y."/>
            <person name="Zeng A.P."/>
            <person name="Brandt B.W."/>
            <person name="Cornell M.J."/>
            <person name="van den Hondel C.A."/>
            <person name="Visser J."/>
            <person name="Oliver S.G."/>
            <person name="Turner G."/>
        </authorList>
    </citation>
    <scope>GENOME REANNOTATION</scope>
    <source>
        <strain>FGSC A4 / ATCC 38163 / CBS 112.46 / NRRL 194 / M139</strain>
    </source>
</reference>
<keyword id="KW-0131">Cell cycle</keyword>
<keyword id="KW-0963">Cytoplasm</keyword>
<keyword id="KW-0235">DNA replication</keyword>
<keyword id="KW-0539">Nucleus</keyword>
<keyword id="KW-1185">Reference proteome</keyword>
<name>SLD2_EMENI</name>
<evidence type="ECO:0000250" key="1"/>
<evidence type="ECO:0000256" key="2">
    <source>
        <dbReference type="SAM" id="MobiDB-lite"/>
    </source>
</evidence>
<evidence type="ECO:0000305" key="3"/>
<organism>
    <name type="scientific">Emericella nidulans (strain FGSC A4 / ATCC 38163 / CBS 112.46 / NRRL 194 / M139)</name>
    <name type="common">Aspergillus nidulans</name>
    <dbReference type="NCBI Taxonomy" id="227321"/>
    <lineage>
        <taxon>Eukaryota</taxon>
        <taxon>Fungi</taxon>
        <taxon>Dikarya</taxon>
        <taxon>Ascomycota</taxon>
        <taxon>Pezizomycotina</taxon>
        <taxon>Eurotiomycetes</taxon>
        <taxon>Eurotiomycetidae</taxon>
        <taxon>Eurotiales</taxon>
        <taxon>Aspergillaceae</taxon>
        <taxon>Aspergillus</taxon>
        <taxon>Aspergillus subgen. Nidulantes</taxon>
    </lineage>
</organism>
<dbReference type="EMBL" id="AACD01000051">
    <property type="protein sequence ID" value="EAA63611.1"/>
    <property type="molecule type" value="Genomic_DNA"/>
</dbReference>
<dbReference type="EMBL" id="BN001306">
    <property type="protein sequence ID" value="CBF83517.1"/>
    <property type="molecule type" value="Genomic_DNA"/>
</dbReference>
<dbReference type="RefSeq" id="XP_660644.1">
    <property type="nucleotide sequence ID" value="XM_655552.1"/>
</dbReference>
<dbReference type="SMR" id="Q5B8U0"/>
<dbReference type="FunCoup" id="Q5B8U0">
    <property type="interactions" value="52"/>
</dbReference>
<dbReference type="STRING" id="227321.Q5B8U0"/>
<dbReference type="EnsemblFungi" id="CBF83517">
    <property type="protein sequence ID" value="CBF83517"/>
    <property type="gene ID" value="ANIA_03040"/>
</dbReference>
<dbReference type="KEGG" id="ani:ANIA_03040"/>
<dbReference type="VEuPathDB" id="FungiDB:AN3040"/>
<dbReference type="eggNOG" id="ENOG502SCF7">
    <property type="taxonomic scope" value="Eukaryota"/>
</dbReference>
<dbReference type="HOGENOM" id="CLU_033089_0_0_1"/>
<dbReference type="InParanoid" id="Q5B8U0"/>
<dbReference type="OMA" id="AVRMPQK"/>
<dbReference type="OrthoDB" id="8775810at2759"/>
<dbReference type="Proteomes" id="UP000000560">
    <property type="component" value="Chromosome VI"/>
</dbReference>
<dbReference type="GO" id="GO:0005737">
    <property type="term" value="C:cytoplasm"/>
    <property type="evidence" value="ECO:0007669"/>
    <property type="project" value="UniProtKB-SubCell"/>
</dbReference>
<dbReference type="GO" id="GO:0031261">
    <property type="term" value="C:DNA replication preinitiation complex"/>
    <property type="evidence" value="ECO:0000318"/>
    <property type="project" value="GO_Central"/>
</dbReference>
<dbReference type="GO" id="GO:0003688">
    <property type="term" value="F:DNA replication origin binding"/>
    <property type="evidence" value="ECO:0000318"/>
    <property type="project" value="GO_Central"/>
</dbReference>
<dbReference type="GO" id="GO:0003697">
    <property type="term" value="F:single-stranded DNA binding"/>
    <property type="evidence" value="ECO:0000318"/>
    <property type="project" value="GO_Central"/>
</dbReference>
<dbReference type="GO" id="GO:0006270">
    <property type="term" value="P:DNA replication initiation"/>
    <property type="evidence" value="ECO:0000318"/>
    <property type="project" value="GO_Central"/>
</dbReference>
<dbReference type="GO" id="GO:0000727">
    <property type="term" value="P:double-strand break repair via break-induced replication"/>
    <property type="evidence" value="ECO:0000318"/>
    <property type="project" value="GO_Central"/>
</dbReference>
<dbReference type="GO" id="GO:1902977">
    <property type="term" value="P:mitotic DNA replication preinitiation complex assembly"/>
    <property type="evidence" value="ECO:0000318"/>
    <property type="project" value="GO_Central"/>
</dbReference>
<dbReference type="CDD" id="cd22289">
    <property type="entry name" value="RecQL4_SLD2_NTD"/>
    <property type="match status" value="1"/>
</dbReference>
<dbReference type="FunFam" id="1.10.10.1460:FF:000001">
    <property type="entry name" value="DNA replication regulator Sld2"/>
    <property type="match status" value="1"/>
</dbReference>
<dbReference type="Gene3D" id="1.10.10.1460">
    <property type="match status" value="1"/>
</dbReference>
<dbReference type="InterPro" id="IPR021110">
    <property type="entry name" value="DNA_rep_checkpnt_protein"/>
</dbReference>
<dbReference type="InterPro" id="IPR040203">
    <property type="entry name" value="Sld2"/>
</dbReference>
<dbReference type="PANTHER" id="PTHR28124">
    <property type="entry name" value="DNA REPLICATION REGULATOR SLD2"/>
    <property type="match status" value="1"/>
</dbReference>
<dbReference type="PANTHER" id="PTHR28124:SF1">
    <property type="entry name" value="DNA REPLICATION REGULATOR SLD2"/>
    <property type="match status" value="1"/>
</dbReference>
<dbReference type="Pfam" id="PF11719">
    <property type="entry name" value="Drc1-Sld2"/>
    <property type="match status" value="1"/>
</dbReference>
<proteinExistence type="inferred from homology"/>
<feature type="chain" id="PRO_0000278434" description="DNA replication regulator sld2">
    <location>
        <begin position="1"/>
        <end position="569"/>
    </location>
</feature>
<feature type="region of interest" description="Disordered" evidence="2">
    <location>
        <begin position="52"/>
        <end position="164"/>
    </location>
</feature>
<feature type="region of interest" description="Disordered" evidence="2">
    <location>
        <begin position="193"/>
        <end position="230"/>
    </location>
</feature>
<feature type="region of interest" description="Disordered" evidence="2">
    <location>
        <begin position="289"/>
        <end position="312"/>
    </location>
</feature>
<feature type="region of interest" description="Disordered" evidence="2">
    <location>
        <begin position="350"/>
        <end position="427"/>
    </location>
</feature>
<feature type="region of interest" description="Disordered" evidence="2">
    <location>
        <begin position="461"/>
        <end position="569"/>
    </location>
</feature>
<feature type="compositionally biased region" description="Basic and acidic residues" evidence="2">
    <location>
        <begin position="67"/>
        <end position="81"/>
    </location>
</feature>
<feature type="compositionally biased region" description="Polar residues" evidence="2">
    <location>
        <begin position="89"/>
        <end position="107"/>
    </location>
</feature>
<feature type="compositionally biased region" description="Polar residues" evidence="2">
    <location>
        <begin position="142"/>
        <end position="153"/>
    </location>
</feature>
<feature type="compositionally biased region" description="Polar residues" evidence="2">
    <location>
        <begin position="350"/>
        <end position="369"/>
    </location>
</feature>
<feature type="compositionally biased region" description="Basic residues" evidence="2">
    <location>
        <begin position="370"/>
        <end position="384"/>
    </location>
</feature>
<feature type="compositionally biased region" description="Polar residues" evidence="2">
    <location>
        <begin position="392"/>
        <end position="407"/>
    </location>
</feature>
<feature type="compositionally biased region" description="Acidic residues" evidence="2">
    <location>
        <begin position="469"/>
        <end position="480"/>
    </location>
</feature>
<feature type="compositionally biased region" description="Basic and acidic residues" evidence="2">
    <location>
        <begin position="481"/>
        <end position="498"/>
    </location>
</feature>
<feature type="compositionally biased region" description="Basic and acidic residues" evidence="2">
    <location>
        <begin position="511"/>
        <end position="533"/>
    </location>
</feature>
<feature type="compositionally biased region" description="Basic residues" evidence="2">
    <location>
        <begin position="552"/>
        <end position="569"/>
    </location>
</feature>
<comment type="function">
    <text evidence="1">Has a role in the initiation of DNA replication. Required at S-phase checkpoint (By similarity).</text>
</comment>
<comment type="subcellular location">
    <subcellularLocation>
        <location>Cytoplasm</location>
    </subcellularLocation>
    <subcellularLocation>
        <location evidence="1">Nucleus</location>
    </subcellularLocation>
</comment>
<comment type="similarity">
    <text evidence="3">Belongs to the SLD2 family.</text>
</comment>